<protein>
    <recommendedName>
        <fullName>Endonuclease 8-like 3</fullName>
        <ecNumber>3.2.2.-</ecNumber>
        <ecNumber evidence="13 14 15 17 18">4.2.99.18</ecNumber>
    </recommendedName>
    <alternativeName>
        <fullName>DNA glycosylase FPG2</fullName>
    </alternativeName>
    <alternativeName>
        <fullName>DNA glycosylase/AP lyase Neil3</fullName>
    </alternativeName>
    <alternativeName>
        <fullName>Endonuclease VIII-like 3</fullName>
    </alternativeName>
    <alternativeName>
        <fullName>Nei-like protein 3</fullName>
    </alternativeName>
</protein>
<evidence type="ECO:0000250" key="1"/>
<evidence type="ECO:0000250" key="2">
    <source>
        <dbReference type="UniProtKB" id="A0A1L8HU22"/>
    </source>
</evidence>
<evidence type="ECO:0000250" key="3">
    <source>
        <dbReference type="UniProtKB" id="Q8TAT5"/>
    </source>
</evidence>
<evidence type="ECO:0000255" key="4">
    <source>
        <dbReference type="PROSITE-ProRule" id="PRU00322"/>
    </source>
</evidence>
<evidence type="ECO:0000255" key="5">
    <source>
        <dbReference type="PROSITE-ProRule" id="PRU00391"/>
    </source>
</evidence>
<evidence type="ECO:0000255" key="6">
    <source>
        <dbReference type="PROSITE-ProRule" id="PRU00392"/>
    </source>
</evidence>
<evidence type="ECO:0000255" key="7">
    <source>
        <dbReference type="PROSITE-ProRule" id="PRU01343"/>
    </source>
</evidence>
<evidence type="ECO:0000256" key="8">
    <source>
        <dbReference type="SAM" id="MobiDB-lite"/>
    </source>
</evidence>
<evidence type="ECO:0000269" key="9">
    <source>
    </source>
</evidence>
<evidence type="ECO:0000269" key="10">
    <source>
    </source>
</evidence>
<evidence type="ECO:0000269" key="11">
    <source>
    </source>
</evidence>
<evidence type="ECO:0000269" key="12">
    <source>
    </source>
</evidence>
<evidence type="ECO:0000269" key="13">
    <source>
    </source>
</evidence>
<evidence type="ECO:0000269" key="14">
    <source>
    </source>
</evidence>
<evidence type="ECO:0000269" key="15">
    <source>
    </source>
</evidence>
<evidence type="ECO:0000269" key="16">
    <source>
    </source>
</evidence>
<evidence type="ECO:0000269" key="17">
    <source>
    </source>
</evidence>
<evidence type="ECO:0000269" key="18">
    <source>
    </source>
</evidence>
<evidence type="ECO:0000303" key="19">
    <source>
    </source>
</evidence>
<evidence type="ECO:0000305" key="20"/>
<evidence type="ECO:0000305" key="21">
    <source>
    </source>
</evidence>
<evidence type="ECO:0007829" key="22">
    <source>
        <dbReference type="PDB" id="3W0F"/>
    </source>
</evidence>
<evidence type="ECO:0007829" key="23">
    <source>
        <dbReference type="PDB" id="7OMK"/>
    </source>
</evidence>
<evidence type="ECO:0007829" key="24">
    <source>
        <dbReference type="PDB" id="8B9N"/>
    </source>
</evidence>
<comment type="function">
    <text evidence="2 13 14 15 16 17 18">DNA glycosylase which prefers single-stranded DNA (ssDNA), or partially ssDNA structures such as bubble and fork structures, to double-stranded DNA (dsDNA) (PubMed:20185759, PubMed:22065741, PubMed:22569481, PubMed:22959434, PubMed:23305905, PubMed:23313161). Mediates interstrand cross-link repair in response to replication stress: acts by mediating DNA glycosylase activity, cleaving one of the two N-glycosyl bonds comprising the interstrand cross-link, which avoids the formation of a double-strand break but generates an abasic site that is bypassed by translesion synthesis polymerases (By similarity). In vitro, displays strong glycosylase activity towards the hydantoin lesions spiroiminodihydantoin (Sp) and guanidinohydantoin (Gh) in both ssDNA and dsDNA; also recognizes FapyA, FapyG, 5-OHU, 5-OHC, 5-OHMH, Tg and 8-oxoA lesions in ssDNA (PubMed:20185759, PubMed:22065741, PubMed:22569481, PubMed:22959434, PubMed:23305905, PubMed:23313161). No activity on 8-oxoG detected (PubMed:20185759, PubMed:22065741, PubMed:22569481, PubMed:22959434, PubMed:23305905, PubMed:23313161). Also shows weak DNA-(apurinic or apyrimidinic site) lyase activity (PubMed:20185759, PubMed:22065741, PubMed:22569481, PubMed:22959434, PubMed:23305905, PubMed:23313161). In vivo, appears to be the primary enzyme involved in removing Sp and Gh from ssDNA in neonatal tissues (PubMed:20185759, PubMed:22065741, PubMed:22569481, PubMed:22959434, PubMed:23305905, PubMed:23313161).</text>
</comment>
<comment type="catalytic activity">
    <reaction evidence="6 13 14 15 17 18">
        <text>2'-deoxyribonucleotide-(2'-deoxyribose 5'-phosphate)-2'-deoxyribonucleotide-DNA = a 3'-end 2'-deoxyribonucleotide-(2,3-dehydro-2,3-deoxyribose 5'-phosphate)-DNA + a 5'-end 5'-phospho-2'-deoxyribonucleoside-DNA + H(+)</text>
        <dbReference type="Rhea" id="RHEA:66592"/>
        <dbReference type="Rhea" id="RHEA-COMP:13180"/>
        <dbReference type="Rhea" id="RHEA-COMP:16897"/>
        <dbReference type="Rhea" id="RHEA-COMP:17067"/>
        <dbReference type="ChEBI" id="CHEBI:15378"/>
        <dbReference type="ChEBI" id="CHEBI:136412"/>
        <dbReference type="ChEBI" id="CHEBI:157695"/>
        <dbReference type="ChEBI" id="CHEBI:167181"/>
        <dbReference type="EC" id="4.2.99.18"/>
    </reaction>
</comment>
<comment type="subcellular location">
    <subcellularLocation>
        <location evidence="10">Nucleus</location>
    </subcellularLocation>
    <subcellularLocation>
        <location evidence="2">Chromosome</location>
    </subcellularLocation>
    <text evidence="2">Recruited to replication stress sites via interaction with ubiquitinated CMG helicase.</text>
</comment>
<comment type="alternative products">
    <event type="alternative splicing"/>
    <isoform>
        <id>Q8K203-1</id>
        <name>1</name>
        <sequence type="displayed"/>
    </isoform>
    <isoform>
        <id>Q8K203-2</id>
        <name>2</name>
        <sequence type="described" ref="VSP_012210"/>
    </isoform>
</comment>
<comment type="tissue specificity">
    <text evidence="10 11 12 17">Expressed in testis, thymus, spleen and bone marrow. In young mice, expressed at higher levels in thymocytes than splenocytes. At 12 dpc, abundant in the subventricular zone (SVZ) of the lateral ventricles. At 17.5 dpc and P0, expression is limited to distinct cells in the cortical SVZ, in cells of the secondary matrix, the dentate gyrus migratory route and the dentate gyrus.</text>
</comment>
<comment type="developmental stage">
    <text evidence="11 12">Highly expressed in the developing brain at 12 dpc-13 dpc when neurogenesis starts. Expression decreases during later development and is undetectable in adult brain.</text>
</comment>
<comment type="induction">
    <text evidence="10 14">By mitogen stimulation in splenocytes, and by hypoxic-ischemic injury in the striatum and hippocampus.</text>
</comment>
<comment type="domain">
    <text>The N-terminal region (2-282) contains the glycosylase and lyase activities.</text>
</comment>
<comment type="domain">
    <text evidence="2">The RanBP2-type zinc-finger, also named NZF zinc finger, recognizes and binds ubiquitinated CMG helicase complex. The GRF-type zinc-fingers recognize single-stranded DNA (ssDNA), possibly on the lagging strand template.</text>
</comment>
<comment type="disruption phenotype">
    <text evidence="10 14 16 17">Perinatal mice show reduced regeneration of neural tissue following ischemic brain damage (stroke), associated with fewer activated microglia and impaired neural stem cell proliferation. Aged mice show deficits in learning and memory, decreased anxiety-like behavior, and changes in hippocampal synapse composition. Otherwise viable and fertile.</text>
</comment>
<comment type="miscellaneous">
    <molecule>Isoform 2</molecule>
    <text evidence="20">May be due to an intron retention.</text>
</comment>
<comment type="similarity">
    <text evidence="6">Belongs to the FPG family.</text>
</comment>
<comment type="caution">
    <text evidence="13 15">Was originally thought to be inactive as a glycosylase, but recent reports demonstrate that cleavage of the initiator methionine is essential for catalytic activity.</text>
</comment>
<sequence length="606" mass="67416">MVEGPGCTLNGEKIRARVLPGQAVTGVRGTALQSLLGPAMSPAASLADVATSAAPMNAKDSGWKLLRLFNGYVYSGVETLGKELFMYFGPRALRIHFGMKGSILINPREGENRAGASPALAVQLTRDLICFYDSSVELRNSVESQQRVRVMEELDICSPKFSFSRAESEVKKQGDRMLCDVLLDQRVLPGVGNIIKNEALFDSGLHPAVKVCQLSDKQACHLVKMTRDFSILFYRCCKAGSAISKHCKVYKRPNCDQCHSKITVCRFGENSRMTYFCPHCQKENPQCVQVCQLPTRNTEISWTPRGEDCFTDSVARKSEEQWSCVVCTLINRPSAKACDACLTTRPLDSVLKNRENSIAFNNLVKYPCNNFENTHTEVKINRKTAFGNTTLVLTDLSNKSSALARKKRANHTIDGESQMFLPTDIGFSDSQHPSKEGINYITQPSNKVNISPTVCAQSKLFSSAHKKFKPAHTSATELKSYNSGLSNSELQTNRTRGHHSKSDGSPLCKMHHRRCVLRVVRKDGENKGRQFYACSLPRGAQCGFFEWADLSFPFCRHGKRSIMKTVLKIGPNNGKNFFVCPLEKKKQCNFFQWAENGPGMEIVPGC</sequence>
<organism>
    <name type="scientific">Mus musculus</name>
    <name type="common">Mouse</name>
    <dbReference type="NCBI Taxonomy" id="10090"/>
    <lineage>
        <taxon>Eukaryota</taxon>
        <taxon>Metazoa</taxon>
        <taxon>Chordata</taxon>
        <taxon>Craniata</taxon>
        <taxon>Vertebrata</taxon>
        <taxon>Euteleostomi</taxon>
        <taxon>Mammalia</taxon>
        <taxon>Eutheria</taxon>
        <taxon>Euarchontoglires</taxon>
        <taxon>Glires</taxon>
        <taxon>Rodentia</taxon>
        <taxon>Myomorpha</taxon>
        <taxon>Muroidea</taxon>
        <taxon>Muridae</taxon>
        <taxon>Murinae</taxon>
        <taxon>Mus</taxon>
        <taxon>Mus</taxon>
    </lineage>
</organism>
<keyword id="KW-0002">3D-structure</keyword>
<keyword id="KW-0025">Alternative splicing</keyword>
<keyword id="KW-0158">Chromosome</keyword>
<keyword id="KW-0227">DNA damage</keyword>
<keyword id="KW-0234">DNA repair</keyword>
<keyword id="KW-0238">DNA-binding</keyword>
<keyword id="KW-0326">Glycosidase</keyword>
<keyword id="KW-0378">Hydrolase</keyword>
<keyword id="KW-0456">Lyase</keyword>
<keyword id="KW-0479">Metal-binding</keyword>
<keyword id="KW-0511">Multifunctional enzyme</keyword>
<keyword id="KW-0539">Nucleus</keyword>
<keyword id="KW-0597">Phosphoprotein</keyword>
<keyword id="KW-1185">Reference proteome</keyword>
<keyword id="KW-0677">Repeat</keyword>
<keyword id="KW-0862">Zinc</keyword>
<keyword id="KW-0863">Zinc-finger</keyword>
<feature type="initiator methionine" description="Removed" evidence="20">
    <location>
        <position position="1"/>
    </location>
</feature>
<feature type="chain" id="PRO_0000170911" description="Endonuclease 8-like 3">
    <location>
        <begin position="2"/>
        <end position="606"/>
    </location>
</feature>
<feature type="zinc finger region" description="FPG-type" evidence="5">
    <location>
        <begin position="248"/>
        <end position="282"/>
    </location>
</feature>
<feature type="zinc finger region" description="RanBP2-type" evidence="4">
    <location>
        <begin position="318"/>
        <end position="347"/>
    </location>
</feature>
<feature type="zinc finger region" description="GRF-type 1" evidence="7">
    <location>
        <begin position="508"/>
        <end position="551"/>
    </location>
</feature>
<feature type="zinc finger region" description="GRF-type 2" evidence="7">
    <location>
        <begin position="555"/>
        <end position="597"/>
    </location>
</feature>
<feature type="region of interest" description="Disordered" evidence="8">
    <location>
        <begin position="479"/>
        <end position="506"/>
    </location>
</feature>
<feature type="compositionally biased region" description="Polar residues" evidence="8">
    <location>
        <begin position="479"/>
        <end position="494"/>
    </location>
</feature>
<feature type="active site" description="Schiff-base intermediate with DNA; via amino nitrogen" evidence="21">
    <location>
        <position position="2"/>
    </location>
</feature>
<feature type="binding site" evidence="1">
    <location>
        <position position="193"/>
    </location>
    <ligand>
        <name>DNA</name>
        <dbReference type="ChEBI" id="CHEBI:16991"/>
    </ligand>
</feature>
<feature type="binding site" evidence="1">
    <location>
        <position position="272"/>
    </location>
    <ligand>
        <name>DNA</name>
        <dbReference type="ChEBI" id="CHEBI:16991"/>
    </ligand>
</feature>
<feature type="binding site" evidence="7">
    <location>
        <position position="508"/>
    </location>
    <ligand>
        <name>Zn(2+)</name>
        <dbReference type="ChEBI" id="CHEBI:29105"/>
        <label>1</label>
    </ligand>
</feature>
<feature type="binding site" evidence="7">
    <location>
        <position position="511"/>
    </location>
    <ligand>
        <name>Zn(2+)</name>
        <dbReference type="ChEBI" id="CHEBI:29105"/>
        <label>1</label>
    </ligand>
</feature>
<feature type="binding site" evidence="7">
    <location>
        <position position="534"/>
    </location>
    <ligand>
        <name>Zn(2+)</name>
        <dbReference type="ChEBI" id="CHEBI:29105"/>
        <label>1</label>
    </ligand>
</feature>
<feature type="binding site" evidence="7">
    <location>
        <position position="542"/>
    </location>
    <ligand>
        <name>Zn(2+)</name>
        <dbReference type="ChEBI" id="CHEBI:29105"/>
        <label>1</label>
    </ligand>
</feature>
<feature type="binding site" evidence="7">
    <location>
        <position position="555"/>
    </location>
    <ligand>
        <name>Zn(2+)</name>
        <dbReference type="ChEBI" id="CHEBI:29105"/>
        <label>2</label>
    </ligand>
</feature>
<feature type="binding site" evidence="7">
    <location>
        <position position="557"/>
    </location>
    <ligand>
        <name>Zn(2+)</name>
        <dbReference type="ChEBI" id="CHEBI:29105"/>
        <label>2</label>
    </ligand>
</feature>
<feature type="binding site" evidence="7">
    <location>
        <position position="580"/>
    </location>
    <ligand>
        <name>Zn(2+)</name>
        <dbReference type="ChEBI" id="CHEBI:29105"/>
        <label>2</label>
    </ligand>
</feature>
<feature type="binding site" evidence="7">
    <location>
        <position position="588"/>
    </location>
    <ligand>
        <name>Zn(2+)</name>
        <dbReference type="ChEBI" id="CHEBI:29105"/>
        <label>2</label>
    </ligand>
</feature>
<feature type="site" description="Important for monofunctional glycosylase activity" evidence="1">
    <location>
        <position position="2"/>
    </location>
</feature>
<feature type="site" description="Required for glycosylase activity" evidence="1">
    <location>
        <position position="82"/>
    </location>
</feature>
<feature type="modified residue" description="Phosphoserine" evidence="3">
    <location>
        <position position="451"/>
    </location>
</feature>
<feature type="splice variant" id="VSP_012210" description="In isoform 2." evidence="19">
    <location>
        <begin position="212"/>
        <end position="606"/>
    </location>
</feature>
<feature type="sequence variant" description="In strain: Czech II." evidence="9">
    <original>L</original>
    <variation>P</variation>
    <location>
        <position position="46"/>
    </location>
</feature>
<feature type="sequence variant" description="In strain: Czech II." evidence="9">
    <original>P</original>
    <variation>H</variation>
    <location>
        <position position="90"/>
    </location>
</feature>
<feature type="sequence variant" description="In strain: Czech II." evidence="9">
    <original>A</original>
    <variation>G</variation>
    <location>
        <position position="114"/>
    </location>
</feature>
<feature type="sequence variant" description="In strain: Czech II." evidence="9">
    <original>V</original>
    <variation>E</variation>
    <location>
        <position position="150"/>
    </location>
</feature>
<feature type="sequence variant" description="In strain: Czech II." evidence="9">
    <original>C</original>
    <variation>R</variation>
    <location>
        <position position="220"/>
    </location>
</feature>
<feature type="sequence variant" description="In strain: Czech II." evidence="9">
    <original>D</original>
    <variation>G</variation>
    <location>
        <position position="256"/>
    </location>
</feature>
<feature type="sequence variant" description="In strain: Czech II." evidence="9">
    <original>C</original>
    <variation>R</variation>
    <location>
        <position position="287"/>
    </location>
</feature>
<feature type="sequence variant" description="In strain: Czech II." evidence="9">
    <original>V</original>
    <variation>A</variation>
    <location>
        <position position="325"/>
    </location>
</feature>
<feature type="sequence variant" description="In strain: Czech II." evidence="9">
    <original>R</original>
    <variation>K</variation>
    <location>
        <position position="556"/>
    </location>
</feature>
<feature type="sequence variant" description="In strain: Czech II." evidence="9">
    <original>K</original>
    <variation>E</variation>
    <location>
        <position position="585"/>
    </location>
</feature>
<feature type="helix" evidence="22">
    <location>
        <begin position="4"/>
        <end position="17"/>
    </location>
</feature>
<feature type="strand" evidence="22">
    <location>
        <begin position="23"/>
        <end position="28"/>
    </location>
</feature>
<feature type="helix" evidence="22">
    <location>
        <begin position="30"/>
        <end position="34"/>
    </location>
</feature>
<feature type="helix" evidence="22">
    <location>
        <begin position="64"/>
        <end position="68"/>
    </location>
</feature>
<feature type="turn" evidence="22">
    <location>
        <begin position="69"/>
        <end position="71"/>
    </location>
</feature>
<feature type="strand" evidence="22">
    <location>
        <begin position="73"/>
        <end position="80"/>
    </location>
</feature>
<feature type="strand" evidence="22">
    <location>
        <begin position="83"/>
        <end position="88"/>
    </location>
</feature>
<feature type="strand" evidence="22">
    <location>
        <begin position="91"/>
        <end position="106"/>
    </location>
</feature>
<feature type="strand" evidence="22">
    <location>
        <begin position="119"/>
        <end position="126"/>
    </location>
</feature>
<feature type="strand" evidence="22">
    <location>
        <begin position="128"/>
        <end position="140"/>
    </location>
</feature>
<feature type="helix" evidence="22">
    <location>
        <begin position="141"/>
        <end position="151"/>
    </location>
</feature>
<feature type="helix" evidence="22">
    <location>
        <begin position="152"/>
        <end position="154"/>
    </location>
</feature>
<feature type="helix" evidence="22">
    <location>
        <begin position="163"/>
        <end position="171"/>
    </location>
</feature>
<feature type="strand" evidence="22">
    <location>
        <begin position="175"/>
        <end position="177"/>
    </location>
</feature>
<feature type="helix" evidence="22">
    <location>
        <begin position="178"/>
        <end position="183"/>
    </location>
</feature>
<feature type="turn" evidence="22">
    <location>
        <begin position="185"/>
        <end position="187"/>
    </location>
</feature>
<feature type="helix" evidence="22">
    <location>
        <begin position="193"/>
        <end position="203"/>
    </location>
</feature>
<feature type="helix" evidence="22">
    <location>
        <begin position="211"/>
        <end position="213"/>
    </location>
</feature>
<feature type="helix" evidence="22">
    <location>
        <begin position="216"/>
        <end position="239"/>
    </location>
</feature>
<feature type="helix" evidence="22">
    <location>
        <begin position="243"/>
        <end position="246"/>
    </location>
</feature>
<feature type="turn" evidence="22">
    <location>
        <begin position="256"/>
        <end position="258"/>
    </location>
</feature>
<feature type="strand" evidence="22">
    <location>
        <begin position="263"/>
        <end position="265"/>
    </location>
</feature>
<feature type="turn" evidence="24">
    <location>
        <begin position="268"/>
        <end position="271"/>
    </location>
</feature>
<feature type="strand" evidence="22">
    <location>
        <begin position="274"/>
        <end position="276"/>
    </location>
</feature>
<feature type="turn" evidence="22">
    <location>
        <begin position="278"/>
        <end position="280"/>
    </location>
</feature>
<feature type="turn" evidence="23">
    <location>
        <begin position="509"/>
        <end position="511"/>
    </location>
</feature>
<feature type="strand" evidence="23">
    <location>
        <begin position="516"/>
        <end position="519"/>
    </location>
</feature>
<feature type="turn" evidence="23">
    <location>
        <begin position="525"/>
        <end position="528"/>
    </location>
</feature>
<feature type="strand" evidence="23">
    <location>
        <begin position="530"/>
        <end position="533"/>
    </location>
</feature>
<feature type="helix" evidence="23">
    <location>
        <begin position="548"/>
        <end position="551"/>
    </location>
</feature>
<feature type="strand" evidence="23">
    <location>
        <begin position="558"/>
        <end position="560"/>
    </location>
</feature>
<feature type="strand" evidence="23">
    <location>
        <begin position="562"/>
        <end position="565"/>
    </location>
</feature>
<feature type="strand" evidence="23">
    <location>
        <begin position="568"/>
        <end position="570"/>
    </location>
</feature>
<feature type="turn" evidence="23">
    <location>
        <begin position="571"/>
        <end position="574"/>
    </location>
</feature>
<feature type="strand" evidence="23">
    <location>
        <begin position="576"/>
        <end position="579"/>
    </location>
</feature>
<feature type="turn" evidence="23">
    <location>
        <begin position="584"/>
        <end position="586"/>
    </location>
</feature>
<accession>Q8K203</accession>
<accession>Q4ADY6</accession>
<accession>Q8CD85</accession>
<accession>Q8R3P4</accession>
<reference key="1">
    <citation type="journal article" date="2005" name="J. Biochem.">
        <title>Hematopoietic tissue-specific expression of mouse Neil3 for endonuclease VIII-like protein.</title>
        <authorList>
            <person name="Torisu K."/>
            <person name="Tsuchimoto D."/>
            <person name="Ohnishi Y."/>
            <person name="Nakabeppu Y."/>
        </authorList>
    </citation>
    <scope>NUCLEOTIDE SEQUENCE [MRNA] (ISOFORM 1)</scope>
    <scope>SUBCELLULAR LOCATION</scope>
    <scope>TISSUE SPECIFICITY</scope>
    <scope>INDUCTION</scope>
    <scope>DISRUPTION PHENOTYPE</scope>
    <source>
        <tissue>Splenocyte</tissue>
    </source>
</reference>
<reference key="2">
    <citation type="journal article" date="2005" name="Science">
        <title>The transcriptional landscape of the mammalian genome.</title>
        <authorList>
            <person name="Carninci P."/>
            <person name="Kasukawa T."/>
            <person name="Katayama S."/>
            <person name="Gough J."/>
            <person name="Frith M.C."/>
            <person name="Maeda N."/>
            <person name="Oyama R."/>
            <person name="Ravasi T."/>
            <person name="Lenhard B."/>
            <person name="Wells C."/>
            <person name="Kodzius R."/>
            <person name="Shimokawa K."/>
            <person name="Bajic V.B."/>
            <person name="Brenner S.E."/>
            <person name="Batalov S."/>
            <person name="Forrest A.R."/>
            <person name="Zavolan M."/>
            <person name="Davis M.J."/>
            <person name="Wilming L.G."/>
            <person name="Aidinis V."/>
            <person name="Allen J.E."/>
            <person name="Ambesi-Impiombato A."/>
            <person name="Apweiler R."/>
            <person name="Aturaliya R.N."/>
            <person name="Bailey T.L."/>
            <person name="Bansal M."/>
            <person name="Baxter L."/>
            <person name="Beisel K.W."/>
            <person name="Bersano T."/>
            <person name="Bono H."/>
            <person name="Chalk A.M."/>
            <person name="Chiu K.P."/>
            <person name="Choudhary V."/>
            <person name="Christoffels A."/>
            <person name="Clutterbuck D.R."/>
            <person name="Crowe M.L."/>
            <person name="Dalla E."/>
            <person name="Dalrymple B.P."/>
            <person name="de Bono B."/>
            <person name="Della Gatta G."/>
            <person name="di Bernardo D."/>
            <person name="Down T."/>
            <person name="Engstrom P."/>
            <person name="Fagiolini M."/>
            <person name="Faulkner G."/>
            <person name="Fletcher C.F."/>
            <person name="Fukushima T."/>
            <person name="Furuno M."/>
            <person name="Futaki S."/>
            <person name="Gariboldi M."/>
            <person name="Georgii-Hemming P."/>
            <person name="Gingeras T.R."/>
            <person name="Gojobori T."/>
            <person name="Green R.E."/>
            <person name="Gustincich S."/>
            <person name="Harbers M."/>
            <person name="Hayashi Y."/>
            <person name="Hensch T.K."/>
            <person name="Hirokawa N."/>
            <person name="Hill D."/>
            <person name="Huminiecki L."/>
            <person name="Iacono M."/>
            <person name="Ikeo K."/>
            <person name="Iwama A."/>
            <person name="Ishikawa T."/>
            <person name="Jakt M."/>
            <person name="Kanapin A."/>
            <person name="Katoh M."/>
            <person name="Kawasawa Y."/>
            <person name="Kelso J."/>
            <person name="Kitamura H."/>
            <person name="Kitano H."/>
            <person name="Kollias G."/>
            <person name="Krishnan S.P."/>
            <person name="Kruger A."/>
            <person name="Kummerfeld S.K."/>
            <person name="Kurochkin I.V."/>
            <person name="Lareau L.F."/>
            <person name="Lazarevic D."/>
            <person name="Lipovich L."/>
            <person name="Liu J."/>
            <person name="Liuni S."/>
            <person name="McWilliam S."/>
            <person name="Madan Babu M."/>
            <person name="Madera M."/>
            <person name="Marchionni L."/>
            <person name="Matsuda H."/>
            <person name="Matsuzawa S."/>
            <person name="Miki H."/>
            <person name="Mignone F."/>
            <person name="Miyake S."/>
            <person name="Morris K."/>
            <person name="Mottagui-Tabar S."/>
            <person name="Mulder N."/>
            <person name="Nakano N."/>
            <person name="Nakauchi H."/>
            <person name="Ng P."/>
            <person name="Nilsson R."/>
            <person name="Nishiguchi S."/>
            <person name="Nishikawa S."/>
            <person name="Nori F."/>
            <person name="Ohara O."/>
            <person name="Okazaki Y."/>
            <person name="Orlando V."/>
            <person name="Pang K.C."/>
            <person name="Pavan W.J."/>
            <person name="Pavesi G."/>
            <person name="Pesole G."/>
            <person name="Petrovsky N."/>
            <person name="Piazza S."/>
            <person name="Reed J."/>
            <person name="Reid J.F."/>
            <person name="Ring B.Z."/>
            <person name="Ringwald M."/>
            <person name="Rost B."/>
            <person name="Ruan Y."/>
            <person name="Salzberg S.L."/>
            <person name="Sandelin A."/>
            <person name="Schneider C."/>
            <person name="Schoenbach C."/>
            <person name="Sekiguchi K."/>
            <person name="Semple C.A."/>
            <person name="Seno S."/>
            <person name="Sessa L."/>
            <person name="Sheng Y."/>
            <person name="Shibata Y."/>
            <person name="Shimada H."/>
            <person name="Shimada K."/>
            <person name="Silva D."/>
            <person name="Sinclair B."/>
            <person name="Sperling S."/>
            <person name="Stupka E."/>
            <person name="Sugiura K."/>
            <person name="Sultana R."/>
            <person name="Takenaka Y."/>
            <person name="Taki K."/>
            <person name="Tammoja K."/>
            <person name="Tan S.L."/>
            <person name="Tang S."/>
            <person name="Taylor M.S."/>
            <person name="Tegner J."/>
            <person name="Teichmann S.A."/>
            <person name="Ueda H.R."/>
            <person name="van Nimwegen E."/>
            <person name="Verardo R."/>
            <person name="Wei C.L."/>
            <person name="Yagi K."/>
            <person name="Yamanishi H."/>
            <person name="Zabarovsky E."/>
            <person name="Zhu S."/>
            <person name="Zimmer A."/>
            <person name="Hide W."/>
            <person name="Bult C."/>
            <person name="Grimmond S.M."/>
            <person name="Teasdale R.D."/>
            <person name="Liu E.T."/>
            <person name="Brusic V."/>
            <person name="Quackenbush J."/>
            <person name="Wahlestedt C."/>
            <person name="Mattick J.S."/>
            <person name="Hume D.A."/>
            <person name="Kai C."/>
            <person name="Sasaki D."/>
            <person name="Tomaru Y."/>
            <person name="Fukuda S."/>
            <person name="Kanamori-Katayama M."/>
            <person name="Suzuki M."/>
            <person name="Aoki J."/>
            <person name="Arakawa T."/>
            <person name="Iida J."/>
            <person name="Imamura K."/>
            <person name="Itoh M."/>
            <person name="Kato T."/>
            <person name="Kawaji H."/>
            <person name="Kawagashira N."/>
            <person name="Kawashima T."/>
            <person name="Kojima M."/>
            <person name="Kondo S."/>
            <person name="Konno H."/>
            <person name="Nakano K."/>
            <person name="Ninomiya N."/>
            <person name="Nishio T."/>
            <person name="Okada M."/>
            <person name="Plessy C."/>
            <person name="Shibata K."/>
            <person name="Shiraki T."/>
            <person name="Suzuki S."/>
            <person name="Tagami M."/>
            <person name="Waki K."/>
            <person name="Watahiki A."/>
            <person name="Okamura-Oho Y."/>
            <person name="Suzuki H."/>
            <person name="Kawai J."/>
            <person name="Hayashizaki Y."/>
        </authorList>
    </citation>
    <scope>NUCLEOTIDE SEQUENCE [LARGE SCALE MRNA] (ISOFORM 2)</scope>
    <source>
        <strain>C57BL/6J</strain>
        <tissue>Thymus</tissue>
    </source>
</reference>
<reference key="3">
    <citation type="journal article" date="2004" name="Genome Res.">
        <title>The status, quality, and expansion of the NIH full-length cDNA project: the Mammalian Gene Collection (MGC).</title>
        <authorList>
            <consortium name="The MGC Project Team"/>
        </authorList>
    </citation>
    <scope>NUCLEOTIDE SEQUENCE [LARGE SCALE MRNA] (ISOFORM 1)</scope>
    <scope>VARIANTS PRO-46; HIS-90; GLY-114; GLU-150; ARG-220; GLY-256; ARG-287; ALA-325; LYS-556 AND GLU-585</scope>
    <source>
        <strain>Czech II</strain>
        <strain>FVB/N</strain>
        <tissue>Mammary tumor</tissue>
    </source>
</reference>
<reference key="4">
    <citation type="submission" date="2005-02" db="EMBL/GenBank/DDBJ databases">
        <title>Molecular cloning and characterization of mouse DNA glycosylase gene, nei like 3 (Neil3); its regulated expression in lymphoid organs.</title>
        <authorList>
            <person name="Torisu K."/>
            <person name="Tsuchimoto D."/>
            <person name="Ohnishi Y."/>
            <person name="Nakabeppu Y."/>
        </authorList>
    </citation>
    <scope>NUCLEOTIDE SEQUENCE [GENOMIC DNA] OF 1-52</scope>
    <source>
        <strain>129/SvJ</strain>
    </source>
</reference>
<reference key="5">
    <citation type="journal article" date="2012" name="Protein Expr. Purif.">
        <title>Expression and purification of active mouse and human NEIL3 proteins.</title>
        <authorList>
            <person name="Liu M."/>
            <person name="Bandaru V."/>
            <person name="Holmes A."/>
            <person name="Averill A.M."/>
            <person name="Cannan W."/>
            <person name="Wallace S.S."/>
        </authorList>
    </citation>
    <scope>FUNCTION AS A GLYCOSYLASE/LYASE</scope>
    <scope>CATALYTIC ACTIVITY</scope>
    <scope>CHARACTERIZATION OF N-TERMINAL DOMAIN</scope>
    <scope>PROBABLE CLEAVAGE OF INITIATOR METHIONINE</scope>
</reference>
<reference key="6">
    <citation type="journal article" date="2010" name="Proc. Natl. Acad. Sci. U.S.A.">
        <title>The mouse ortholog of NEIL3 is a functional DNA glycosylase in vitro and in vivo.</title>
        <authorList>
            <person name="Liu M."/>
            <person name="Bandaru V."/>
            <person name="Bond J.P."/>
            <person name="Jaruga P."/>
            <person name="Zhao X."/>
            <person name="Christov P.P."/>
            <person name="Burrows C.J."/>
            <person name="Rizzo C.J."/>
            <person name="Dizdaroglu M."/>
            <person name="Wallace S.S."/>
        </authorList>
    </citation>
    <scope>FUNCTION</scope>
    <scope>CATALYTIC ACTIVITY</scope>
    <scope>ACTIVE SITE</scope>
</reference>
<reference key="7">
    <citation type="journal article" date="2009" name="BMC Neurosci.">
        <title>Expression patterns of Neil3 during embryonic brain development and neoplasia.</title>
        <authorList>
            <person name="Hildrestrand G.A."/>
            <person name="Neurauter C.G."/>
            <person name="Diep D.B."/>
            <person name="Castellanos C.G."/>
            <person name="Krauss S."/>
            <person name="Bjoras M."/>
            <person name="Luna L."/>
        </authorList>
    </citation>
    <scope>TISSUE SPECIFICITY</scope>
    <scope>DEVELOPMENTAL STAGE</scope>
</reference>
<reference key="8">
    <citation type="journal article" date="2009" name="Genes Cells">
        <title>Human Nei-like protein NEIL3 has AP lyase activity specific for single-stranded DNA and confers oxidative stress resistance in Escherichia coli mutant.</title>
        <authorList>
            <person name="Takao M."/>
            <person name="Oohata Y."/>
            <person name="Kitadokoro K."/>
            <person name="Kobayashi K."/>
            <person name="Iwai S."/>
            <person name="Yasui A."/>
            <person name="Yonei S."/>
            <person name="Zhang Q.M."/>
        </authorList>
    </citation>
    <scope>TISSUE SPECIFICITY</scope>
    <scope>DEVELOPMENTAL STAGE</scope>
</reference>
<reference key="9">
    <citation type="journal article" date="2011" name="Proc. Natl. Acad. Sci. U.S.A.">
        <title>Endonuclease VIII-like 3 (Neil3) DNA glycosylase promotes neurogenesis induced by hypoxia-ischemia.</title>
        <authorList>
            <person name="Sejersted Y."/>
            <person name="Hildrestrand G.A."/>
            <person name="Kunke D."/>
            <person name="Rolseth V."/>
            <person name="Krokeide S.Z."/>
            <person name="Neurauter C.G."/>
            <person name="Suganthan R."/>
            <person name="Atneosen-Asegg M."/>
            <person name="Fleming A.M."/>
            <person name="Saugstad O.D."/>
            <person name="Burrows C.J."/>
            <person name="Luna L."/>
            <person name="Bjoras M."/>
        </authorList>
    </citation>
    <scope>FUNCTION</scope>
    <scope>CATALYTIC ACTIVITY</scope>
    <scope>INDUCTION</scope>
    <scope>DISRUPTION PHENOTYPE</scope>
</reference>
<reference key="10">
    <citation type="journal article" date="2012" name="Cell Rep.">
        <title>Hippocampal adult neurogenesis is maintained by Neil3-dependent repair of oxidative DNA lesions in neural progenitor cells.</title>
        <authorList>
            <person name="Regnell C.E."/>
            <person name="Hildrestrand G.A."/>
            <person name="Sejersted Y."/>
            <person name="Medin T."/>
            <person name="Moldestad O."/>
            <person name="Rolseth V."/>
            <person name="Krokeide S.Z."/>
            <person name="Suganthan R."/>
            <person name="Luna L."/>
            <person name="Bjoras M."/>
            <person name="Bergersen L.H."/>
        </authorList>
    </citation>
    <scope>FUNCTION</scope>
    <scope>DISRUPTION PHENOTYPE</scope>
</reference>
<reference key="11">
    <citation type="journal article" date="2013" name="Biochim. Biophys. Acta">
        <title>Loss of Neil3, the major DNA glycosylase activity for removal of hydantoins in single stranded DNA, reduces cellular proliferation and sensitizes cells to genotoxic stress.</title>
        <authorList>
            <person name="Rolseth V."/>
            <person name="Krokeide S.Z."/>
            <person name="Kunke D."/>
            <person name="Neurauter C.G."/>
            <person name="Suganthan R."/>
            <person name="Sejersted Y."/>
            <person name="Hildrestrand G.A."/>
            <person name="Bjoras M."/>
            <person name="Luna L."/>
        </authorList>
    </citation>
    <scope>FUNCTION</scope>
    <scope>CATALYTIC ACTIVITY</scope>
    <scope>TISSUE SPECIFICITY</scope>
    <scope>DISRUPTION PHENOTYPE</scope>
</reference>
<reference key="12">
    <citation type="journal article" date="2013" name="Structure">
        <title>Structural characterization of a mouse ortholog of human NEIL3 with a marked preference for single-stranded DNA.</title>
        <authorList>
            <person name="Liu M."/>
            <person name="Imamura K."/>
            <person name="Averill A.M."/>
            <person name="Wallace S.S."/>
            <person name="Doublie S."/>
        </authorList>
    </citation>
    <scope>X-RAY CRYSTALLOGRAPHY (2.0 ANGSTROMS) OF 2-282 IN COMPLEX WITH ZINC</scope>
    <scope>FUNCTION</scope>
    <scope>CATALYTIC ACTIVITY</scope>
</reference>
<gene>
    <name type="primary">Neil3</name>
</gene>
<proteinExistence type="evidence at protein level"/>
<dbReference type="EC" id="3.2.2.-"/>
<dbReference type="EC" id="4.2.99.18" evidence="13 14 15 17 18"/>
<dbReference type="EMBL" id="AB072931">
    <property type="protein sequence ID" value="BAC22661.1"/>
    <property type="molecule type" value="mRNA"/>
</dbReference>
<dbReference type="EMBL" id="AK031027">
    <property type="protein sequence ID" value="BAC27219.1"/>
    <property type="molecule type" value="mRNA"/>
</dbReference>
<dbReference type="EMBL" id="BC024921">
    <property type="protein sequence ID" value="AAH24921.1"/>
    <property type="molecule type" value="mRNA"/>
</dbReference>
<dbReference type="EMBL" id="BC034753">
    <property type="protein sequence ID" value="AAH34753.1"/>
    <property type="molecule type" value="mRNA"/>
</dbReference>
<dbReference type="EMBL" id="AB202125">
    <property type="protein sequence ID" value="BAE16548.1"/>
    <property type="molecule type" value="Genomic_DNA"/>
</dbReference>
<dbReference type="CCDS" id="CCDS22305.1">
    <molecule id="Q8K203-1"/>
</dbReference>
<dbReference type="RefSeq" id="NP_666320.1">
    <molecule id="Q8K203-1"/>
    <property type="nucleotide sequence ID" value="NM_146208.2"/>
</dbReference>
<dbReference type="PDB" id="3W0F">
    <property type="method" value="X-ray"/>
    <property type="resolution" value="2.00 A"/>
    <property type="chains" value="A=2-282"/>
</dbReference>
<dbReference type="PDB" id="7OMK">
    <property type="method" value="NMR"/>
    <property type="chains" value="A=505-597"/>
</dbReference>
<dbReference type="PDB" id="7Z5A">
    <property type="method" value="X-ray"/>
    <property type="resolution" value="2.28 A"/>
    <property type="chains" value="A=1-282"/>
</dbReference>
<dbReference type="PDB" id="8B9N">
    <property type="method" value="X-ray"/>
    <property type="resolution" value="2.00 A"/>
    <property type="chains" value="A/C=1-282"/>
</dbReference>
<dbReference type="PDBsum" id="3W0F"/>
<dbReference type="PDBsum" id="7OMK"/>
<dbReference type="PDBsum" id="7Z5A"/>
<dbReference type="PDBsum" id="8B9N"/>
<dbReference type="SMR" id="Q8K203"/>
<dbReference type="BioGRID" id="231506">
    <property type="interactions" value="2"/>
</dbReference>
<dbReference type="FunCoup" id="Q8K203">
    <property type="interactions" value="2063"/>
</dbReference>
<dbReference type="STRING" id="10090.ENSMUSP00000041909"/>
<dbReference type="GlyGen" id="Q8K203">
    <property type="glycosylation" value="2 sites, 1 O-linked glycan (1 site)"/>
</dbReference>
<dbReference type="iPTMnet" id="Q8K203"/>
<dbReference type="PhosphoSitePlus" id="Q8K203"/>
<dbReference type="PaxDb" id="10090-ENSMUSP00000041909"/>
<dbReference type="PeptideAtlas" id="Q8K203"/>
<dbReference type="ProteomicsDB" id="287359">
    <molecule id="Q8K203-1"/>
</dbReference>
<dbReference type="ProteomicsDB" id="287360">
    <molecule id="Q8K203-2"/>
</dbReference>
<dbReference type="Pumba" id="Q8K203"/>
<dbReference type="Antibodypedia" id="17262">
    <property type="antibodies" value="179 antibodies from 30 providers"/>
</dbReference>
<dbReference type="DNASU" id="234258"/>
<dbReference type="Ensembl" id="ENSMUST00000047768.11">
    <molecule id="Q8K203-1"/>
    <property type="protein sequence ID" value="ENSMUSP00000041909.5"/>
    <property type="gene ID" value="ENSMUSG00000039396.12"/>
</dbReference>
<dbReference type="GeneID" id="234258"/>
<dbReference type="KEGG" id="mmu:234258"/>
<dbReference type="UCSC" id="uc009lsa.2">
    <molecule id="Q8K203-1"/>
    <property type="organism name" value="mouse"/>
</dbReference>
<dbReference type="UCSC" id="uc009lsb.2">
    <molecule id="Q8K203-2"/>
    <property type="organism name" value="mouse"/>
</dbReference>
<dbReference type="AGR" id="MGI:2384588"/>
<dbReference type="CTD" id="55247"/>
<dbReference type="MGI" id="MGI:2384588">
    <property type="gene designation" value="Neil3"/>
</dbReference>
<dbReference type="VEuPathDB" id="HostDB:ENSMUSG00000039396"/>
<dbReference type="eggNOG" id="ENOG502QWRN">
    <property type="taxonomic scope" value="Eukaryota"/>
</dbReference>
<dbReference type="GeneTree" id="ENSGT00940000153230"/>
<dbReference type="HOGENOM" id="CLU_482283_0_0_1"/>
<dbReference type="InParanoid" id="Q8K203"/>
<dbReference type="OMA" id="GMKGSVM"/>
<dbReference type="OrthoDB" id="498125at2759"/>
<dbReference type="PhylomeDB" id="Q8K203"/>
<dbReference type="TreeFam" id="TF331502"/>
<dbReference type="BRENDA" id="3.2.2.23">
    <property type="organism ID" value="3474"/>
</dbReference>
<dbReference type="Reactome" id="R-MMU-110330">
    <property type="pathway name" value="Recognition and association of DNA glycosylase with site containing an affected purine"/>
</dbReference>
<dbReference type="Reactome" id="R-MMU-110331">
    <property type="pathway name" value="Cleavage of the damaged purine"/>
</dbReference>
<dbReference type="BioGRID-ORCS" id="234258">
    <property type="hits" value="2 hits in 116 CRISPR screens"/>
</dbReference>
<dbReference type="ChiTaRS" id="Neil3">
    <property type="organism name" value="mouse"/>
</dbReference>
<dbReference type="EvolutionaryTrace" id="Q8K203"/>
<dbReference type="PRO" id="PR:Q8K203"/>
<dbReference type="Proteomes" id="UP000000589">
    <property type="component" value="Chromosome 8"/>
</dbReference>
<dbReference type="RNAct" id="Q8K203">
    <property type="molecule type" value="protein"/>
</dbReference>
<dbReference type="Bgee" id="ENSMUSG00000039396">
    <property type="expression patterns" value="Expressed in animal zygote and 141 other cell types or tissues"/>
</dbReference>
<dbReference type="ExpressionAtlas" id="Q8K203">
    <property type="expression patterns" value="baseline and differential"/>
</dbReference>
<dbReference type="GO" id="GO:0005694">
    <property type="term" value="C:chromosome"/>
    <property type="evidence" value="ECO:0007669"/>
    <property type="project" value="UniProtKB-SubCell"/>
</dbReference>
<dbReference type="GO" id="GO:0005654">
    <property type="term" value="C:nucleoplasm"/>
    <property type="evidence" value="ECO:0000304"/>
    <property type="project" value="Reactome"/>
</dbReference>
<dbReference type="GO" id="GO:0005634">
    <property type="term" value="C:nucleus"/>
    <property type="evidence" value="ECO:0000314"/>
    <property type="project" value="UniProtKB"/>
</dbReference>
<dbReference type="GO" id="GO:0000405">
    <property type="term" value="F:bubble DNA binding"/>
    <property type="evidence" value="ECO:0000314"/>
    <property type="project" value="UniProtKB"/>
</dbReference>
<dbReference type="GO" id="GO:0140078">
    <property type="term" value="F:class I DNA-(apurinic or apyrimidinic site) endonuclease activity"/>
    <property type="evidence" value="ECO:0007669"/>
    <property type="project" value="UniProtKB-EC"/>
</dbReference>
<dbReference type="GO" id="GO:0003684">
    <property type="term" value="F:damaged DNA binding"/>
    <property type="evidence" value="ECO:0000250"/>
    <property type="project" value="UniProtKB"/>
</dbReference>
<dbReference type="GO" id="GO:0019104">
    <property type="term" value="F:DNA N-glycosylase activity"/>
    <property type="evidence" value="ECO:0000314"/>
    <property type="project" value="UniProtKB"/>
</dbReference>
<dbReference type="GO" id="GO:0003906">
    <property type="term" value="F:DNA-(apurinic or apyrimidinic site) endonuclease activity"/>
    <property type="evidence" value="ECO:0000314"/>
    <property type="project" value="UniProtKB"/>
</dbReference>
<dbReference type="GO" id="GO:0003690">
    <property type="term" value="F:double-stranded DNA binding"/>
    <property type="evidence" value="ECO:0000314"/>
    <property type="project" value="UniProtKB"/>
</dbReference>
<dbReference type="GO" id="GO:1904931">
    <property type="term" value="F:MCM complex binding"/>
    <property type="evidence" value="ECO:0000250"/>
    <property type="project" value="UniProtKB"/>
</dbReference>
<dbReference type="GO" id="GO:0003697">
    <property type="term" value="F:single-stranded DNA binding"/>
    <property type="evidence" value="ECO:0000314"/>
    <property type="project" value="UniProtKB"/>
</dbReference>
<dbReference type="GO" id="GO:0008270">
    <property type="term" value="F:zinc ion binding"/>
    <property type="evidence" value="ECO:0007669"/>
    <property type="project" value="UniProtKB-KW"/>
</dbReference>
<dbReference type="GO" id="GO:0006284">
    <property type="term" value="P:base-excision repair"/>
    <property type="evidence" value="ECO:0000314"/>
    <property type="project" value="UniProtKB"/>
</dbReference>
<dbReference type="GO" id="GO:0036297">
    <property type="term" value="P:interstrand cross-link repair"/>
    <property type="evidence" value="ECO:0000250"/>
    <property type="project" value="UniProtKB"/>
</dbReference>
<dbReference type="GO" id="GO:0000012">
    <property type="term" value="P:single strand break repair"/>
    <property type="evidence" value="ECO:0007669"/>
    <property type="project" value="Ensembl"/>
</dbReference>
<dbReference type="CDD" id="cd08969">
    <property type="entry name" value="MeNeil3_N"/>
    <property type="match status" value="1"/>
</dbReference>
<dbReference type="FunFam" id="2.30.30.380:FF:000017">
    <property type="entry name" value="Nei like DNA glycosylase 3"/>
    <property type="match status" value="1"/>
</dbReference>
<dbReference type="FunFam" id="3.20.190.10:FF:000005">
    <property type="entry name" value="Nei like DNA glycosylase 3"/>
    <property type="match status" value="1"/>
</dbReference>
<dbReference type="FunFam" id="1.10.8.50:FF:000008">
    <property type="entry name" value="Nei-like DNA glycosylase 3"/>
    <property type="match status" value="1"/>
</dbReference>
<dbReference type="Gene3D" id="1.10.8.50">
    <property type="match status" value="1"/>
</dbReference>
<dbReference type="Gene3D" id="3.20.190.10">
    <property type="entry name" value="MutM-like, N-terminal"/>
    <property type="match status" value="1"/>
</dbReference>
<dbReference type="Gene3D" id="2.30.30.380">
    <property type="entry name" value="Zn-finger domain of Sec23/24"/>
    <property type="match status" value="1"/>
</dbReference>
<dbReference type="InterPro" id="IPR015886">
    <property type="entry name" value="DNA_glyclase/AP_lyase_DNA-bd"/>
</dbReference>
<dbReference type="InterPro" id="IPR015887">
    <property type="entry name" value="DNA_glyclase_Znf_dom_DNA_BS"/>
</dbReference>
<dbReference type="InterPro" id="IPR012319">
    <property type="entry name" value="FPG_cat"/>
</dbReference>
<dbReference type="InterPro" id="IPR035937">
    <property type="entry name" value="MutM-like_N-ter"/>
</dbReference>
<dbReference type="InterPro" id="IPR010979">
    <property type="entry name" value="Ribosomal_uS13-like_H2TH"/>
</dbReference>
<dbReference type="InterPro" id="IPR000214">
    <property type="entry name" value="Znf_DNA_glyclase/AP_lyase"/>
</dbReference>
<dbReference type="InterPro" id="IPR010666">
    <property type="entry name" value="Znf_GRF"/>
</dbReference>
<dbReference type="InterPro" id="IPR001876">
    <property type="entry name" value="Znf_RanBP2"/>
</dbReference>
<dbReference type="InterPro" id="IPR036443">
    <property type="entry name" value="Znf_RanBP2_sf"/>
</dbReference>
<dbReference type="PANTHER" id="PTHR22993:SF10">
    <property type="entry name" value="ENDONUCLEASE 8-LIKE 3"/>
    <property type="match status" value="1"/>
</dbReference>
<dbReference type="PANTHER" id="PTHR22993">
    <property type="entry name" value="FORMAMIDOPYRIMIDINE-DNA GLYCOSYLASE"/>
    <property type="match status" value="1"/>
</dbReference>
<dbReference type="Pfam" id="PF06831">
    <property type="entry name" value="H2TH"/>
    <property type="match status" value="1"/>
</dbReference>
<dbReference type="Pfam" id="PF06839">
    <property type="entry name" value="Zn_ribbon_GRF"/>
    <property type="match status" value="2"/>
</dbReference>
<dbReference type="Pfam" id="PF00641">
    <property type="entry name" value="Zn_ribbon_RanBP"/>
    <property type="match status" value="1"/>
</dbReference>
<dbReference type="SMART" id="SM01232">
    <property type="entry name" value="H2TH"/>
    <property type="match status" value="1"/>
</dbReference>
<dbReference type="SMART" id="SM00547">
    <property type="entry name" value="ZnF_RBZ"/>
    <property type="match status" value="1"/>
</dbReference>
<dbReference type="SUPFAM" id="SSF81624">
    <property type="entry name" value="N-terminal domain of MutM-like DNA repair proteins"/>
    <property type="match status" value="1"/>
</dbReference>
<dbReference type="SUPFAM" id="SSF90209">
    <property type="entry name" value="Ran binding protein zinc finger-like"/>
    <property type="match status" value="1"/>
</dbReference>
<dbReference type="SUPFAM" id="SSF46946">
    <property type="entry name" value="S13-like H2TH domain"/>
    <property type="match status" value="1"/>
</dbReference>
<dbReference type="PROSITE" id="PS51068">
    <property type="entry name" value="FPG_CAT"/>
    <property type="match status" value="1"/>
</dbReference>
<dbReference type="PROSITE" id="PS01242">
    <property type="entry name" value="ZF_FPG_1"/>
    <property type="match status" value="1"/>
</dbReference>
<dbReference type="PROSITE" id="PS51066">
    <property type="entry name" value="ZF_FPG_2"/>
    <property type="match status" value="1"/>
</dbReference>
<dbReference type="PROSITE" id="PS51999">
    <property type="entry name" value="ZF_GRF"/>
    <property type="match status" value="2"/>
</dbReference>
<dbReference type="PROSITE" id="PS01358">
    <property type="entry name" value="ZF_RANBP2_1"/>
    <property type="match status" value="1"/>
</dbReference>
<dbReference type="PROSITE" id="PS50199">
    <property type="entry name" value="ZF_RANBP2_2"/>
    <property type="match status" value="1"/>
</dbReference>
<name>NEIL3_MOUSE</name>